<comment type="miscellaneous">
    <text>Binds to bacitracin.</text>
</comment>
<sequence>ARYAILFAGSNVVYNAXXQADIYTIYTFL</sequence>
<proteinExistence type="evidence at protein level"/>
<reference key="1">
    <citation type="journal article" date="1993" name="FEMS Microbiol. Lett.">
        <title>Purification of cysteine proteinases from trichomonads using bacitracin-sepharose.</title>
        <authorList>
            <person name="Irvine J.W."/>
            <person name="Coombs G.H."/>
            <person name="North M.J."/>
        </authorList>
    </citation>
    <scope>PROTEIN SEQUENCE</scope>
</reference>
<accession>P33405</accession>
<keyword id="KW-0903">Direct protein sequencing</keyword>
<name>28KD_TRIFO</name>
<protein>
    <recommendedName>
        <fullName>28 kDa protein</fullName>
    </recommendedName>
</protein>
<organism>
    <name type="scientific">Tritrichomonas foetus</name>
    <name type="common">Trichomonas foetus</name>
    <name type="synonym">Tritrichomonas suis</name>
    <dbReference type="NCBI Taxonomy" id="56690"/>
    <lineage>
        <taxon>Eukaryota</taxon>
        <taxon>Metamonada</taxon>
        <taxon>Parabasalia</taxon>
        <taxon>Tritrichomonadida</taxon>
        <taxon>Tritrichomonadidae</taxon>
        <taxon>Tritrichomonas</taxon>
    </lineage>
</organism>
<feature type="chain" id="PRO_0000064357" description="28 kDa protein">
    <location>
        <begin position="1"/>
        <end position="29" status="greater than"/>
    </location>
</feature>
<feature type="unsure residue" description="V or Y">
    <location>
        <position position="12"/>
    </location>
</feature>
<feature type="unsure residue" description="V or W">
    <location>
        <position position="13"/>
    </location>
</feature>
<feature type="non-terminal residue">
    <location>
        <position position="29"/>
    </location>
</feature>